<protein>
    <recommendedName>
        <fullName evidence="1">Lipoprotein signal peptidase</fullName>
        <ecNumber evidence="1">3.4.23.36</ecNumber>
    </recommendedName>
    <alternativeName>
        <fullName evidence="1">Prolipoprotein signal peptidase</fullName>
    </alternativeName>
    <alternativeName>
        <fullName evidence="1">Signal peptidase II</fullName>
        <shortName evidence="1">SPase II</shortName>
    </alternativeName>
</protein>
<gene>
    <name evidence="1" type="primary">lspA</name>
    <name type="ordered locus">Plut_0482</name>
</gene>
<reference key="1">
    <citation type="submission" date="2005-08" db="EMBL/GenBank/DDBJ databases">
        <title>Complete sequence of Pelodictyon luteolum DSM 273.</title>
        <authorList>
            <consortium name="US DOE Joint Genome Institute"/>
            <person name="Copeland A."/>
            <person name="Lucas S."/>
            <person name="Lapidus A."/>
            <person name="Barry K."/>
            <person name="Detter J.C."/>
            <person name="Glavina T."/>
            <person name="Hammon N."/>
            <person name="Israni S."/>
            <person name="Pitluck S."/>
            <person name="Bryant D."/>
            <person name="Schmutz J."/>
            <person name="Larimer F."/>
            <person name="Land M."/>
            <person name="Kyrpides N."/>
            <person name="Ivanova N."/>
            <person name="Richardson P."/>
        </authorList>
    </citation>
    <scope>NUCLEOTIDE SEQUENCE [LARGE SCALE GENOMIC DNA]</scope>
    <source>
        <strain>DSM 273 / BCRC 81028 / 2530</strain>
    </source>
</reference>
<keyword id="KW-0064">Aspartyl protease</keyword>
<keyword id="KW-0997">Cell inner membrane</keyword>
<keyword id="KW-1003">Cell membrane</keyword>
<keyword id="KW-0378">Hydrolase</keyword>
<keyword id="KW-0472">Membrane</keyword>
<keyword id="KW-0645">Protease</keyword>
<keyword id="KW-1185">Reference proteome</keyword>
<keyword id="KW-0812">Transmembrane</keyword>
<keyword id="KW-1133">Transmembrane helix</keyword>
<organism>
    <name type="scientific">Chlorobium luteolum (strain DSM 273 / BCRC 81028 / 2530)</name>
    <name type="common">Pelodictyon luteolum</name>
    <dbReference type="NCBI Taxonomy" id="319225"/>
    <lineage>
        <taxon>Bacteria</taxon>
        <taxon>Pseudomonadati</taxon>
        <taxon>Chlorobiota</taxon>
        <taxon>Chlorobiia</taxon>
        <taxon>Chlorobiales</taxon>
        <taxon>Chlorobiaceae</taxon>
        <taxon>Chlorobium/Pelodictyon group</taxon>
        <taxon>Pelodictyon</taxon>
    </lineage>
</organism>
<dbReference type="EC" id="3.4.23.36" evidence="1"/>
<dbReference type="EMBL" id="CP000096">
    <property type="protein sequence ID" value="ABB23370.1"/>
    <property type="molecule type" value="Genomic_DNA"/>
</dbReference>
<dbReference type="RefSeq" id="WP_011357245.1">
    <property type="nucleotide sequence ID" value="NC_007512.1"/>
</dbReference>
<dbReference type="SMR" id="Q3B5L1"/>
<dbReference type="STRING" id="319225.Plut_0482"/>
<dbReference type="KEGG" id="plt:Plut_0482"/>
<dbReference type="eggNOG" id="COG0597">
    <property type="taxonomic scope" value="Bacteria"/>
</dbReference>
<dbReference type="HOGENOM" id="CLU_083252_3_1_10"/>
<dbReference type="OrthoDB" id="9810259at2"/>
<dbReference type="UniPathway" id="UPA00665"/>
<dbReference type="Proteomes" id="UP000002709">
    <property type="component" value="Chromosome"/>
</dbReference>
<dbReference type="GO" id="GO:0005886">
    <property type="term" value="C:plasma membrane"/>
    <property type="evidence" value="ECO:0007669"/>
    <property type="project" value="UniProtKB-SubCell"/>
</dbReference>
<dbReference type="GO" id="GO:0004190">
    <property type="term" value="F:aspartic-type endopeptidase activity"/>
    <property type="evidence" value="ECO:0007669"/>
    <property type="project" value="UniProtKB-UniRule"/>
</dbReference>
<dbReference type="GO" id="GO:0006508">
    <property type="term" value="P:proteolysis"/>
    <property type="evidence" value="ECO:0007669"/>
    <property type="project" value="UniProtKB-KW"/>
</dbReference>
<dbReference type="HAMAP" id="MF_00161">
    <property type="entry name" value="LspA"/>
    <property type="match status" value="1"/>
</dbReference>
<dbReference type="InterPro" id="IPR001872">
    <property type="entry name" value="Peptidase_A8"/>
</dbReference>
<dbReference type="NCBIfam" id="TIGR00077">
    <property type="entry name" value="lspA"/>
    <property type="match status" value="1"/>
</dbReference>
<dbReference type="NCBIfam" id="NF011368">
    <property type="entry name" value="PRK14787.1"/>
    <property type="match status" value="1"/>
</dbReference>
<dbReference type="PANTHER" id="PTHR33695">
    <property type="entry name" value="LIPOPROTEIN SIGNAL PEPTIDASE"/>
    <property type="match status" value="1"/>
</dbReference>
<dbReference type="PANTHER" id="PTHR33695:SF1">
    <property type="entry name" value="LIPOPROTEIN SIGNAL PEPTIDASE"/>
    <property type="match status" value="1"/>
</dbReference>
<dbReference type="Pfam" id="PF01252">
    <property type="entry name" value="Peptidase_A8"/>
    <property type="match status" value="1"/>
</dbReference>
<dbReference type="PRINTS" id="PR00781">
    <property type="entry name" value="LIPOSIGPTASE"/>
</dbReference>
<dbReference type="PROSITE" id="PS00855">
    <property type="entry name" value="SPASE_II"/>
    <property type="match status" value="1"/>
</dbReference>
<sequence length="167" mass="18676">MKMFSMLALFVIAADQFTKKLAVFFLRDMQQSITIIPDFFSFTYAENRGVAFGMEFAPPFVLLMLTGAIVLGVLVFVARSRNRTPIFLSAFGLIAGGGIGNMIDRIASGRVTDFIYFDLYKGELFGHWVSLWPIFNVADSAITIGACMLVLFYNRIFPDTEETRHAG</sequence>
<evidence type="ECO:0000255" key="1">
    <source>
        <dbReference type="HAMAP-Rule" id="MF_00161"/>
    </source>
</evidence>
<feature type="chain" id="PRO_1000038811" description="Lipoprotein signal peptidase">
    <location>
        <begin position="1"/>
        <end position="167"/>
    </location>
</feature>
<feature type="transmembrane region" description="Helical" evidence="1">
    <location>
        <begin position="56"/>
        <end position="76"/>
    </location>
</feature>
<feature type="transmembrane region" description="Helical" evidence="1">
    <location>
        <begin position="84"/>
        <end position="104"/>
    </location>
</feature>
<feature type="transmembrane region" description="Helical" evidence="1">
    <location>
        <begin position="132"/>
        <end position="152"/>
    </location>
</feature>
<feature type="active site" evidence="1">
    <location>
        <position position="113"/>
    </location>
</feature>
<feature type="active site" evidence="1">
    <location>
        <position position="139"/>
    </location>
</feature>
<comment type="function">
    <text evidence="1">This protein specifically catalyzes the removal of signal peptides from prolipoproteins.</text>
</comment>
<comment type="catalytic activity">
    <reaction evidence="1">
        <text>Release of signal peptides from bacterial membrane prolipoproteins. Hydrolyzes -Xaa-Yaa-Zaa-|-(S,diacylglyceryl)Cys-, in which Xaa is hydrophobic (preferably Leu), and Yaa (Ala or Ser) and Zaa (Gly or Ala) have small, neutral side chains.</text>
        <dbReference type="EC" id="3.4.23.36"/>
    </reaction>
</comment>
<comment type="pathway">
    <text evidence="1">Protein modification; lipoprotein biosynthesis (signal peptide cleavage).</text>
</comment>
<comment type="subcellular location">
    <subcellularLocation>
        <location evidence="1">Cell inner membrane</location>
        <topology evidence="1">Multi-pass membrane protein</topology>
    </subcellularLocation>
</comment>
<comment type="similarity">
    <text evidence="1">Belongs to the peptidase A8 family.</text>
</comment>
<proteinExistence type="inferred from homology"/>
<accession>Q3B5L1</accession>
<name>LSPA_CHLL3</name>